<reference key="1">
    <citation type="journal article" date="1995" name="Biochem. J.">
        <title>Cloning of the Schizosaccharomyces pombe gene encoding diadenosine 5',5''-P1,P4-tetraphosphate (Ap4A) asymmetrical hydrolase: sequence similarity with the histidine triad (HIT) protein family.</title>
        <authorList>
            <person name="Huang Y."/>
            <person name="Garrison P.N."/>
            <person name="Barnes L.D."/>
        </authorList>
    </citation>
    <scope>NUCLEOTIDE SEQUENCE [GENOMIC DNA]</scope>
    <scope>PROTEIN SEQUENCE OF 2-21</scope>
    <source>
        <strain>972 / ATCC 24843</strain>
    </source>
</reference>
<reference key="2">
    <citation type="journal article" date="2002" name="Nature">
        <title>The genome sequence of Schizosaccharomyces pombe.</title>
        <authorList>
            <person name="Wood V."/>
            <person name="Gwilliam R."/>
            <person name="Rajandream M.A."/>
            <person name="Lyne M.H."/>
            <person name="Lyne R."/>
            <person name="Stewart A."/>
            <person name="Sgouros J.G."/>
            <person name="Peat N."/>
            <person name="Hayles J."/>
            <person name="Baker S.G."/>
            <person name="Basham D."/>
            <person name="Bowman S."/>
            <person name="Brooks K."/>
            <person name="Brown D."/>
            <person name="Brown S."/>
            <person name="Chillingworth T."/>
            <person name="Churcher C.M."/>
            <person name="Collins M."/>
            <person name="Connor R."/>
            <person name="Cronin A."/>
            <person name="Davis P."/>
            <person name="Feltwell T."/>
            <person name="Fraser A."/>
            <person name="Gentles S."/>
            <person name="Goble A."/>
            <person name="Hamlin N."/>
            <person name="Harris D.E."/>
            <person name="Hidalgo J."/>
            <person name="Hodgson G."/>
            <person name="Holroyd S."/>
            <person name="Hornsby T."/>
            <person name="Howarth S."/>
            <person name="Huckle E.J."/>
            <person name="Hunt S."/>
            <person name="Jagels K."/>
            <person name="James K.D."/>
            <person name="Jones L."/>
            <person name="Jones M."/>
            <person name="Leather S."/>
            <person name="McDonald S."/>
            <person name="McLean J."/>
            <person name="Mooney P."/>
            <person name="Moule S."/>
            <person name="Mungall K.L."/>
            <person name="Murphy L.D."/>
            <person name="Niblett D."/>
            <person name="Odell C."/>
            <person name="Oliver K."/>
            <person name="O'Neil S."/>
            <person name="Pearson D."/>
            <person name="Quail M.A."/>
            <person name="Rabbinowitsch E."/>
            <person name="Rutherford K.M."/>
            <person name="Rutter S."/>
            <person name="Saunders D."/>
            <person name="Seeger K."/>
            <person name="Sharp S."/>
            <person name="Skelton J."/>
            <person name="Simmonds M.N."/>
            <person name="Squares R."/>
            <person name="Squares S."/>
            <person name="Stevens K."/>
            <person name="Taylor K."/>
            <person name="Taylor R.G."/>
            <person name="Tivey A."/>
            <person name="Walsh S.V."/>
            <person name="Warren T."/>
            <person name="Whitehead S."/>
            <person name="Woodward J.R."/>
            <person name="Volckaert G."/>
            <person name="Aert R."/>
            <person name="Robben J."/>
            <person name="Grymonprez B."/>
            <person name="Weltjens I."/>
            <person name="Vanstreels E."/>
            <person name="Rieger M."/>
            <person name="Schaefer M."/>
            <person name="Mueller-Auer S."/>
            <person name="Gabel C."/>
            <person name="Fuchs M."/>
            <person name="Duesterhoeft A."/>
            <person name="Fritzc C."/>
            <person name="Holzer E."/>
            <person name="Moestl D."/>
            <person name="Hilbert H."/>
            <person name="Borzym K."/>
            <person name="Langer I."/>
            <person name="Beck A."/>
            <person name="Lehrach H."/>
            <person name="Reinhardt R."/>
            <person name="Pohl T.M."/>
            <person name="Eger P."/>
            <person name="Zimmermann W."/>
            <person name="Wedler H."/>
            <person name="Wambutt R."/>
            <person name="Purnelle B."/>
            <person name="Goffeau A."/>
            <person name="Cadieu E."/>
            <person name="Dreano S."/>
            <person name="Gloux S."/>
            <person name="Lelaure V."/>
            <person name="Mottier S."/>
            <person name="Galibert F."/>
            <person name="Aves S.J."/>
            <person name="Xiang Z."/>
            <person name="Hunt C."/>
            <person name="Moore K."/>
            <person name="Hurst S.M."/>
            <person name="Lucas M."/>
            <person name="Rochet M."/>
            <person name="Gaillardin C."/>
            <person name="Tallada V.A."/>
            <person name="Garzon A."/>
            <person name="Thode G."/>
            <person name="Daga R.R."/>
            <person name="Cruzado L."/>
            <person name="Jimenez J."/>
            <person name="Sanchez M."/>
            <person name="del Rey F."/>
            <person name="Benito J."/>
            <person name="Dominguez A."/>
            <person name="Revuelta J.L."/>
            <person name="Moreno S."/>
            <person name="Armstrong J."/>
            <person name="Forsburg S.L."/>
            <person name="Cerutti L."/>
            <person name="Lowe T."/>
            <person name="McCombie W.R."/>
            <person name="Paulsen I."/>
            <person name="Potashkin J."/>
            <person name="Shpakovski G.V."/>
            <person name="Ussery D."/>
            <person name="Barrell B.G."/>
            <person name="Nurse P."/>
        </authorList>
    </citation>
    <scope>NUCLEOTIDE SEQUENCE [LARGE SCALE GENOMIC DNA]</scope>
    <source>
        <strain>972 / ATCC 24843</strain>
    </source>
</reference>
<name>APH1_SCHPO</name>
<sequence>MPKQLYFSKFPVGSQVFYRTKLSAAFVNLKPILPGHVLVIPQRAVPRLKDLTPSELTDLFTSVRKVQQVIEKVFSASASNIGIQDGVDAGQTVPHVHVHIIPRKKADFSENDLVYSELEKNEGNLASLYLTGNERYAGDERPPTSMRQAIPKDEDRKPRTLEEMEKEAQWLKGYFSEEQEKE</sequence>
<comment type="function">
    <text>Asymmetrically hydrolyzes Ap4A to yield AMP and ATP.</text>
</comment>
<comment type="catalytic activity">
    <reaction>
        <text>P(1),P(4)-bis(5'-guanosyl) tetraphosphate + H2O = GMP + GTP + 2 H(+)</text>
        <dbReference type="Rhea" id="RHEA:22484"/>
        <dbReference type="ChEBI" id="CHEBI:15377"/>
        <dbReference type="ChEBI" id="CHEBI:15378"/>
        <dbReference type="ChEBI" id="CHEBI:37565"/>
        <dbReference type="ChEBI" id="CHEBI:57553"/>
        <dbReference type="ChEBI" id="CHEBI:58115"/>
        <dbReference type="EC" id="3.6.1.17"/>
    </reaction>
</comment>
<gene>
    <name type="primary">aph1</name>
    <name type="ORF">SPCC4G3.02</name>
</gene>
<feature type="initiator methionine" description="Removed" evidence="4">
    <location>
        <position position="1"/>
    </location>
</feature>
<feature type="chain" id="PRO_0000109788" description="Bis(5'-nucleosyl)-tetraphosphatase [asymmetrical]">
    <location>
        <begin position="2"/>
        <end position="182"/>
    </location>
</feature>
<feature type="domain" description="HIT" evidence="2">
    <location>
        <begin position="3"/>
        <end position="110"/>
    </location>
</feature>
<feature type="region of interest" description="Disordered" evidence="3">
    <location>
        <begin position="135"/>
        <end position="161"/>
    </location>
</feature>
<feature type="short sequence motif" description="Histidine triad motif">
    <location>
        <begin position="95"/>
        <end position="99"/>
    </location>
</feature>
<feature type="compositionally biased region" description="Basic and acidic residues" evidence="3">
    <location>
        <begin position="150"/>
        <end position="161"/>
    </location>
</feature>
<feature type="active site" description="Tele-AMP-histidine intermediate" evidence="1">
    <location>
        <position position="97"/>
    </location>
</feature>
<feature type="binding site" evidence="1">
    <location>
        <position position="28"/>
    </location>
    <ligand>
        <name>substrate</name>
    </ligand>
</feature>
<feature type="binding site" evidence="1">
    <location>
        <position position="84"/>
    </location>
    <ligand>
        <name>substrate</name>
    </ligand>
</feature>
<feature type="binding site" evidence="1">
    <location>
        <begin position="90"/>
        <end position="93"/>
    </location>
    <ligand>
        <name>substrate</name>
    </ligand>
</feature>
<feature type="binding site" evidence="1">
    <location>
        <position position="99"/>
    </location>
    <ligand>
        <name>substrate</name>
    </ligand>
</feature>
<dbReference type="EC" id="3.6.1.17"/>
<dbReference type="EMBL" id="U32615">
    <property type="protein sequence ID" value="AAC49143.1"/>
    <property type="molecule type" value="Genomic_DNA"/>
</dbReference>
<dbReference type="EMBL" id="CU329672">
    <property type="protein sequence ID" value="CAB09779.1"/>
    <property type="molecule type" value="Genomic_DNA"/>
</dbReference>
<dbReference type="PIR" id="S64700">
    <property type="entry name" value="S64700"/>
</dbReference>
<dbReference type="RefSeq" id="NP_587836.1">
    <property type="nucleotide sequence ID" value="NM_001022829.2"/>
</dbReference>
<dbReference type="SMR" id="P49776"/>
<dbReference type="BioGRID" id="275860">
    <property type="interactions" value="8"/>
</dbReference>
<dbReference type="FunCoup" id="P49776">
    <property type="interactions" value="83"/>
</dbReference>
<dbReference type="STRING" id="284812.P49776"/>
<dbReference type="iPTMnet" id="P49776"/>
<dbReference type="PaxDb" id="4896-SPCC4G3.02.1"/>
<dbReference type="EnsemblFungi" id="SPCC4G3.02.1">
    <property type="protein sequence ID" value="SPCC4G3.02.1:pep"/>
    <property type="gene ID" value="SPCC4G3.02"/>
</dbReference>
<dbReference type="GeneID" id="2539292"/>
<dbReference type="KEGG" id="spo:2539292"/>
<dbReference type="PomBase" id="SPCC4G3.02">
    <property type="gene designation" value="aph1"/>
</dbReference>
<dbReference type="VEuPathDB" id="FungiDB:SPCC4G3.02"/>
<dbReference type="eggNOG" id="KOG3379">
    <property type="taxonomic scope" value="Eukaryota"/>
</dbReference>
<dbReference type="HOGENOM" id="CLU_056776_7_3_1"/>
<dbReference type="InParanoid" id="P49776"/>
<dbReference type="OMA" id="RTIKFGP"/>
<dbReference type="PhylomeDB" id="P49776"/>
<dbReference type="PRO" id="PR:P49776"/>
<dbReference type="Proteomes" id="UP000002485">
    <property type="component" value="Chromosome III"/>
</dbReference>
<dbReference type="GO" id="GO:0005829">
    <property type="term" value="C:cytosol"/>
    <property type="evidence" value="ECO:0007005"/>
    <property type="project" value="PomBase"/>
</dbReference>
<dbReference type="GO" id="GO:0005739">
    <property type="term" value="C:mitochondrion"/>
    <property type="evidence" value="ECO:0000250"/>
    <property type="project" value="PomBase"/>
</dbReference>
<dbReference type="GO" id="GO:0005634">
    <property type="term" value="C:nucleus"/>
    <property type="evidence" value="ECO:0007005"/>
    <property type="project" value="PomBase"/>
</dbReference>
<dbReference type="GO" id="GO:0004081">
    <property type="term" value="F:bis(5'-nucleosyl)-tetraphosphatase (asymmetrical) activity"/>
    <property type="evidence" value="ECO:0000314"/>
    <property type="project" value="PomBase"/>
</dbReference>
<dbReference type="GO" id="GO:0005525">
    <property type="term" value="F:GTP binding"/>
    <property type="evidence" value="ECO:0007669"/>
    <property type="project" value="UniProtKB-KW"/>
</dbReference>
<dbReference type="GO" id="GO:0015964">
    <property type="term" value="P:diadenosine triphosphate catabolic process"/>
    <property type="evidence" value="ECO:0000314"/>
    <property type="project" value="PomBase"/>
</dbReference>
<dbReference type="CDD" id="cd01275">
    <property type="entry name" value="FHIT"/>
    <property type="match status" value="1"/>
</dbReference>
<dbReference type="FunFam" id="3.30.428.10:FF:000011">
    <property type="entry name" value="Fragile histidine triad"/>
    <property type="match status" value="1"/>
</dbReference>
<dbReference type="Gene3D" id="3.30.428.10">
    <property type="entry name" value="HIT-like"/>
    <property type="match status" value="1"/>
</dbReference>
<dbReference type="InterPro" id="IPR051884">
    <property type="entry name" value="Bis(5'-adenosyl)-TPase_reg"/>
</dbReference>
<dbReference type="InterPro" id="IPR039383">
    <property type="entry name" value="FHIT"/>
</dbReference>
<dbReference type="InterPro" id="IPR019808">
    <property type="entry name" value="Histidine_triad_CS"/>
</dbReference>
<dbReference type="InterPro" id="IPR001310">
    <property type="entry name" value="Histidine_triad_HIT"/>
</dbReference>
<dbReference type="InterPro" id="IPR011146">
    <property type="entry name" value="HIT-like"/>
</dbReference>
<dbReference type="InterPro" id="IPR036265">
    <property type="entry name" value="HIT-like_sf"/>
</dbReference>
<dbReference type="PANTHER" id="PTHR46243">
    <property type="entry name" value="BIS(5'-ADENOSYL)-TRIPHOSPHATASE"/>
    <property type="match status" value="1"/>
</dbReference>
<dbReference type="PANTHER" id="PTHR46243:SF1">
    <property type="entry name" value="BIS(5'-ADENOSYL)-TRIPHOSPHATASE"/>
    <property type="match status" value="1"/>
</dbReference>
<dbReference type="Pfam" id="PF01230">
    <property type="entry name" value="HIT"/>
    <property type="match status" value="1"/>
</dbReference>
<dbReference type="PRINTS" id="PR00332">
    <property type="entry name" value="HISTRIAD"/>
</dbReference>
<dbReference type="SUPFAM" id="SSF54197">
    <property type="entry name" value="HIT-like"/>
    <property type="match status" value="1"/>
</dbReference>
<dbReference type="PROSITE" id="PS00892">
    <property type="entry name" value="HIT_1"/>
    <property type="match status" value="1"/>
</dbReference>
<dbReference type="PROSITE" id="PS51084">
    <property type="entry name" value="HIT_2"/>
    <property type="match status" value="1"/>
</dbReference>
<accession>P49776</accession>
<proteinExistence type="evidence at protein level"/>
<evidence type="ECO:0000250" key="1"/>
<evidence type="ECO:0000255" key="2">
    <source>
        <dbReference type="PROSITE-ProRule" id="PRU00464"/>
    </source>
</evidence>
<evidence type="ECO:0000256" key="3">
    <source>
        <dbReference type="SAM" id="MobiDB-lite"/>
    </source>
</evidence>
<evidence type="ECO:0000269" key="4">
    <source>
    </source>
</evidence>
<organism>
    <name type="scientific">Schizosaccharomyces pombe (strain 972 / ATCC 24843)</name>
    <name type="common">Fission yeast</name>
    <dbReference type="NCBI Taxonomy" id="284812"/>
    <lineage>
        <taxon>Eukaryota</taxon>
        <taxon>Fungi</taxon>
        <taxon>Dikarya</taxon>
        <taxon>Ascomycota</taxon>
        <taxon>Taphrinomycotina</taxon>
        <taxon>Schizosaccharomycetes</taxon>
        <taxon>Schizosaccharomycetales</taxon>
        <taxon>Schizosaccharomycetaceae</taxon>
        <taxon>Schizosaccharomyces</taxon>
    </lineage>
</organism>
<protein>
    <recommendedName>
        <fullName>Bis(5'-nucleosyl)-tetraphosphatase [asymmetrical]</fullName>
        <ecNumber>3.6.1.17</ecNumber>
    </recommendedName>
    <alternativeName>
        <fullName>Diadenosine 5',5'''-P1,P4-tetraphosphate asymmetrical hydrolase</fullName>
        <shortName>Ap4A hydrolase</shortName>
        <shortName>Ap4Aase</shortName>
        <shortName>Diadenosine tetraphosphatase</shortName>
    </alternativeName>
</protein>
<keyword id="KW-0903">Direct protein sequencing</keyword>
<keyword id="KW-0342">GTP-binding</keyword>
<keyword id="KW-0378">Hydrolase</keyword>
<keyword id="KW-0547">Nucleotide-binding</keyword>
<keyword id="KW-1185">Reference proteome</keyword>